<evidence type="ECO:0000255" key="1">
    <source>
        <dbReference type="HAMAP-Rule" id="MF_00711"/>
    </source>
</evidence>
<keyword id="KW-0560">Oxidoreductase</keyword>
<keyword id="KW-0663">Pyridoxal phosphate</keyword>
<reference key="1">
    <citation type="journal article" date="2008" name="J. Bacteriol.">
        <title>Complete genome sequence of Neisseria gonorrhoeae NCCP11945.</title>
        <authorList>
            <person name="Chung G.T."/>
            <person name="Yoo J.S."/>
            <person name="Oh H.B."/>
            <person name="Lee Y.S."/>
            <person name="Cha S.H."/>
            <person name="Kim S.J."/>
            <person name="Yoo C.K."/>
        </authorList>
    </citation>
    <scope>NUCLEOTIDE SEQUENCE [LARGE SCALE GENOMIC DNA]</scope>
    <source>
        <strain>NCCP11945</strain>
    </source>
</reference>
<dbReference type="EC" id="1.4.4.2" evidence="1"/>
<dbReference type="EMBL" id="CP001050">
    <property type="protein sequence ID" value="ACF30206.1"/>
    <property type="molecule type" value="Genomic_DNA"/>
</dbReference>
<dbReference type="RefSeq" id="WP_012503780.1">
    <property type="nucleotide sequence ID" value="NC_011035.1"/>
</dbReference>
<dbReference type="SMR" id="B4RN40"/>
<dbReference type="KEGG" id="ngk:NGK_1550"/>
<dbReference type="HOGENOM" id="CLU_004620_3_2_4"/>
<dbReference type="Proteomes" id="UP000002564">
    <property type="component" value="Chromosome"/>
</dbReference>
<dbReference type="GO" id="GO:0005829">
    <property type="term" value="C:cytosol"/>
    <property type="evidence" value="ECO:0007669"/>
    <property type="project" value="TreeGrafter"/>
</dbReference>
<dbReference type="GO" id="GO:0005960">
    <property type="term" value="C:glycine cleavage complex"/>
    <property type="evidence" value="ECO:0007669"/>
    <property type="project" value="TreeGrafter"/>
</dbReference>
<dbReference type="GO" id="GO:0016594">
    <property type="term" value="F:glycine binding"/>
    <property type="evidence" value="ECO:0007669"/>
    <property type="project" value="TreeGrafter"/>
</dbReference>
<dbReference type="GO" id="GO:0004375">
    <property type="term" value="F:glycine dehydrogenase (decarboxylating) activity"/>
    <property type="evidence" value="ECO:0007669"/>
    <property type="project" value="UniProtKB-EC"/>
</dbReference>
<dbReference type="GO" id="GO:0030170">
    <property type="term" value="F:pyridoxal phosphate binding"/>
    <property type="evidence" value="ECO:0007669"/>
    <property type="project" value="TreeGrafter"/>
</dbReference>
<dbReference type="GO" id="GO:0019464">
    <property type="term" value="P:glycine decarboxylation via glycine cleavage system"/>
    <property type="evidence" value="ECO:0007669"/>
    <property type="project" value="UniProtKB-UniRule"/>
</dbReference>
<dbReference type="FunFam" id="3.40.640.10:FF:000005">
    <property type="entry name" value="Glycine dehydrogenase (decarboxylating), mitochondrial"/>
    <property type="match status" value="1"/>
</dbReference>
<dbReference type="FunFam" id="3.90.1150.10:FF:000007">
    <property type="entry name" value="Glycine dehydrogenase (decarboxylating), mitochondrial"/>
    <property type="match status" value="1"/>
</dbReference>
<dbReference type="FunFam" id="3.40.640.10:FF:000007">
    <property type="entry name" value="glycine dehydrogenase (Decarboxylating), mitochondrial"/>
    <property type="match status" value="1"/>
</dbReference>
<dbReference type="Gene3D" id="3.90.1150.10">
    <property type="entry name" value="Aspartate Aminotransferase, domain 1"/>
    <property type="match status" value="2"/>
</dbReference>
<dbReference type="Gene3D" id="3.40.640.10">
    <property type="entry name" value="Type I PLP-dependent aspartate aminotransferase-like (Major domain)"/>
    <property type="match status" value="2"/>
</dbReference>
<dbReference type="HAMAP" id="MF_00711">
    <property type="entry name" value="GcvP"/>
    <property type="match status" value="1"/>
</dbReference>
<dbReference type="InterPro" id="IPR003437">
    <property type="entry name" value="GcvP"/>
</dbReference>
<dbReference type="InterPro" id="IPR049316">
    <property type="entry name" value="GDC-P_C"/>
</dbReference>
<dbReference type="InterPro" id="IPR049315">
    <property type="entry name" value="GDC-P_N"/>
</dbReference>
<dbReference type="InterPro" id="IPR020581">
    <property type="entry name" value="GDC_P"/>
</dbReference>
<dbReference type="InterPro" id="IPR015424">
    <property type="entry name" value="PyrdxlP-dep_Trfase"/>
</dbReference>
<dbReference type="InterPro" id="IPR015421">
    <property type="entry name" value="PyrdxlP-dep_Trfase_major"/>
</dbReference>
<dbReference type="InterPro" id="IPR015422">
    <property type="entry name" value="PyrdxlP-dep_Trfase_small"/>
</dbReference>
<dbReference type="NCBIfam" id="TIGR00461">
    <property type="entry name" value="gcvP"/>
    <property type="match status" value="1"/>
</dbReference>
<dbReference type="NCBIfam" id="NF003346">
    <property type="entry name" value="PRK04366.1"/>
    <property type="match status" value="1"/>
</dbReference>
<dbReference type="PANTHER" id="PTHR11773:SF13">
    <property type="entry name" value="GLYCINE DEHYDROGENASE (DECARBOXYLATING)"/>
    <property type="match status" value="1"/>
</dbReference>
<dbReference type="PANTHER" id="PTHR11773">
    <property type="entry name" value="GLYCINE DEHYDROGENASE, DECARBOXYLATING"/>
    <property type="match status" value="1"/>
</dbReference>
<dbReference type="Pfam" id="PF21478">
    <property type="entry name" value="GcvP2_C"/>
    <property type="match status" value="1"/>
</dbReference>
<dbReference type="Pfam" id="PF02347">
    <property type="entry name" value="GDC-P"/>
    <property type="match status" value="2"/>
</dbReference>
<dbReference type="SUPFAM" id="SSF53383">
    <property type="entry name" value="PLP-dependent transferases"/>
    <property type="match status" value="2"/>
</dbReference>
<gene>
    <name evidence="1" type="primary">gcvP</name>
    <name type="ordered locus">NGK_1550</name>
</gene>
<proteinExistence type="inferred from homology"/>
<comment type="function">
    <text evidence="1">The glycine cleavage system catalyzes the degradation of glycine. The P protein binds the alpha-amino group of glycine through its pyridoxal phosphate cofactor; CO(2) is released and the remaining methylamine moiety is then transferred to the lipoamide cofactor of the H protein.</text>
</comment>
<comment type="catalytic activity">
    <reaction evidence="1">
        <text>N(6)-[(R)-lipoyl]-L-lysyl-[glycine-cleavage complex H protein] + glycine + H(+) = N(6)-[(R)-S(8)-aminomethyldihydrolipoyl]-L-lysyl-[glycine-cleavage complex H protein] + CO2</text>
        <dbReference type="Rhea" id="RHEA:24304"/>
        <dbReference type="Rhea" id="RHEA-COMP:10494"/>
        <dbReference type="Rhea" id="RHEA-COMP:10495"/>
        <dbReference type="ChEBI" id="CHEBI:15378"/>
        <dbReference type="ChEBI" id="CHEBI:16526"/>
        <dbReference type="ChEBI" id="CHEBI:57305"/>
        <dbReference type="ChEBI" id="CHEBI:83099"/>
        <dbReference type="ChEBI" id="CHEBI:83143"/>
        <dbReference type="EC" id="1.4.4.2"/>
    </reaction>
</comment>
<comment type="cofactor">
    <cofactor evidence="1">
        <name>pyridoxal 5'-phosphate</name>
        <dbReference type="ChEBI" id="CHEBI:597326"/>
    </cofactor>
</comment>
<comment type="subunit">
    <text evidence="1">The glycine cleavage system is composed of four proteins: P, T, L and H.</text>
</comment>
<comment type="similarity">
    <text evidence="1">Belongs to the GcvP family.</text>
</comment>
<organism>
    <name type="scientific">Neisseria gonorrhoeae (strain NCCP11945)</name>
    <dbReference type="NCBI Taxonomy" id="521006"/>
    <lineage>
        <taxon>Bacteria</taxon>
        <taxon>Pseudomonadati</taxon>
        <taxon>Pseudomonadota</taxon>
        <taxon>Betaproteobacteria</taxon>
        <taxon>Neisseriales</taxon>
        <taxon>Neisseriaceae</taxon>
        <taxon>Neisseria</taxon>
    </lineage>
</organism>
<feature type="chain" id="PRO_1000132444" description="Glycine dehydrogenase (decarboxylating)">
    <location>
        <begin position="1"/>
        <end position="950"/>
    </location>
</feature>
<feature type="modified residue" description="N6-(pyridoxal phosphate)lysine" evidence="1">
    <location>
        <position position="698"/>
    </location>
</feature>
<sequence length="950" mass="104165">MKLSELFNPNEFAARHLSFGDEAALLAAVGEKSMDDFVGNTLPQSIRMPSELDLPEALTEADALAKLKGIASKNVINKSYIGLGYYPTRVPNVILRNVLENPGWYTAYTPYQAEIAQGRLEALLNFQQVCIDLTGFPVAGASLLDEATAAAEAMAMAHRVGKVKSERFFVDARVYPQTLDVMKTRAKYFGFELVVSDFAQADEGEYFGALFQYVGKDGDVQDLQDVIGRLKAKGTIVAVAADIMSLVLLKSPAELGADIALGNTQRFGVPMGFGGPHAAYFAFKDEFKRSAPGRIIGVSKDASGKPALRMALSTREQHIRREKATSNICTAQALLTNLAGMYAVYHGPKGVKRIANRIHTLASVFADALVSDGLKVVHEVFFDTVTVDFGSKEKADQVFAAALESGYNLRRVNNTQVAAAFHETSVYEDLADLYRAFTGKDTFTFADDVKGRLNAELLRQDDILQHPVYNSYHTEHEMLRYLKKLEDRDLAMNRSMISLGSCTMKLNATAEMLPITWTEFSDIHPYAPEAQTAGYRELLADMENSLKAITGFDAISFQPNSGAQGEYSGMLAIRRYQEAQGEAHRNICLIPKSAHGTNPATAAMLGLKVVVVDTDEHGNVNIDDLKAKAEQHRDALSAIMITYPSTHGVYEEGIRDICRIIHENGGQVYMDGANLNAQIGIMQPAEVGADVLHMNLHKTFCIPHGGGGPGMGPIGLKAHLAPFAPGHTLTDTHSASAGQTSVAAAAFGSASILPITWMYLTMMGKQGMEQATRWALLNANYVAKRLSEDYPILYTGKNGRIAHECIVDLRPLKAESGITETDIAKRLMDYGFHAPTVSFPVAGTLMIEPTESESKAELDRFIAALKSIRREVQKVIDGEWPKDDNPLVNAPHTAADITGEWAHPYSREEAVFPLPFVREHKFWPFVNRVDDVYGDRNLVCSCPPMENYED</sequence>
<name>GCSP_NEIG2</name>
<protein>
    <recommendedName>
        <fullName evidence="1">Glycine dehydrogenase (decarboxylating)</fullName>
        <ecNumber evidence="1">1.4.4.2</ecNumber>
    </recommendedName>
    <alternativeName>
        <fullName evidence="1">Glycine cleavage system P-protein</fullName>
    </alternativeName>
    <alternativeName>
        <fullName evidence="1">Glycine decarboxylase</fullName>
    </alternativeName>
    <alternativeName>
        <fullName evidence="1">Glycine dehydrogenase (aminomethyl-transferring)</fullName>
    </alternativeName>
</protein>
<accession>B4RN40</accession>